<comment type="function">
    <text evidence="1">Catalyzes the attachment of proline to tRNA(Pro) in a two-step reaction: proline is first activated by ATP to form Pro-AMP and then transferred to the acceptor end of tRNA(Pro). As ProRS can inadvertently accommodate and process non-cognate amino acids such as alanine and cysteine, to avoid such errors it has two additional distinct editing activities against alanine. One activity is designated as 'pretransfer' editing and involves the tRNA(Pro)-independent hydrolysis of activated Ala-AMP. The other activity is designated 'posttransfer' editing and involves deacylation of mischarged Ala-tRNA(Pro). The misacylated Cys-tRNA(Pro) is not edited by ProRS.</text>
</comment>
<comment type="catalytic activity">
    <reaction evidence="1">
        <text>tRNA(Pro) + L-proline + ATP = L-prolyl-tRNA(Pro) + AMP + diphosphate</text>
        <dbReference type="Rhea" id="RHEA:14305"/>
        <dbReference type="Rhea" id="RHEA-COMP:9700"/>
        <dbReference type="Rhea" id="RHEA-COMP:9702"/>
        <dbReference type="ChEBI" id="CHEBI:30616"/>
        <dbReference type="ChEBI" id="CHEBI:33019"/>
        <dbReference type="ChEBI" id="CHEBI:60039"/>
        <dbReference type="ChEBI" id="CHEBI:78442"/>
        <dbReference type="ChEBI" id="CHEBI:78532"/>
        <dbReference type="ChEBI" id="CHEBI:456215"/>
        <dbReference type="EC" id="6.1.1.15"/>
    </reaction>
</comment>
<comment type="subunit">
    <text evidence="1">Homodimer.</text>
</comment>
<comment type="subcellular location">
    <subcellularLocation>
        <location evidence="1">Cytoplasm</location>
    </subcellularLocation>
</comment>
<comment type="domain">
    <text evidence="1">Consists of three domains: the N-terminal catalytic domain, the editing domain and the C-terminal anticodon-binding domain.</text>
</comment>
<comment type="similarity">
    <text evidence="1">Belongs to the class-II aminoacyl-tRNA synthetase family. ProS type 1 subfamily.</text>
</comment>
<accession>B7LW79</accession>
<sequence length="572" mass="63589">MRTSQYLLSTLKETPADAEVISHQLMLRAGMIRKLASGLYTWLPTGVRVLKKVENIVREEMNNAGAIEVLMPVVQPSELWQESGRWEQYGPELLRIADRGDRPFVLGPTHEEVITDLIRNELSSYKQLPLNFYQIQTKFRDEVRPRFGVMRSREFLMKDAYSFHTSQESLQETYDAMYAAYSKIFSRMGLDFRAVQADTGSIGGSASHEFQVLAQSGEDDVVFSDTSDYAANIELAEAIAPKEPRAAATQEMTLVDTPNAKTIAELVEQFNLPIEKTVKTLLVKAVEGSSFPLVALLVRGDHELNEVKAEKLPQVASPLTFATEEEIRAVVKAGPGSLGPVNMPIPVVIDRTVAAMSDFAAGANIDGKHYFGINWDRDVATPEVADIRNVVAGDPSPDGQGTLLIKRGIEVGHIFQLGTKYSEALKASVQGEDGRNQILTMGCYGIGVTRVVAAAIEQNYDERGIVWPDAIAPFQVAILPMNMHKSFRVQELAEKLYSELRAQGIEVLLDDRKERPGVMFADMELIGIPHTIVLGDRNLDNDDIEYKYRRNGEKQLIKTGDIVDYLVKQIKG</sequence>
<proteinExistence type="inferred from homology"/>
<feature type="chain" id="PRO_1000199385" description="Proline--tRNA ligase">
    <location>
        <begin position="1"/>
        <end position="572"/>
    </location>
</feature>
<gene>
    <name evidence="1" type="primary">proS</name>
    <name type="ordered locus">EFER_0218</name>
</gene>
<protein>
    <recommendedName>
        <fullName evidence="1">Proline--tRNA ligase</fullName>
        <ecNumber evidence="1">6.1.1.15</ecNumber>
    </recommendedName>
    <alternativeName>
        <fullName evidence="1">Prolyl-tRNA synthetase</fullName>
        <shortName evidence="1">ProRS</shortName>
    </alternativeName>
</protein>
<evidence type="ECO:0000255" key="1">
    <source>
        <dbReference type="HAMAP-Rule" id="MF_01569"/>
    </source>
</evidence>
<name>SYP_ESCF3</name>
<organism>
    <name type="scientific">Escherichia fergusonii (strain ATCC 35469 / DSM 13698 / CCUG 18766 / IAM 14443 / JCM 21226 / LMG 7866 / NBRC 102419 / NCTC 12128 / CDC 0568-73)</name>
    <dbReference type="NCBI Taxonomy" id="585054"/>
    <lineage>
        <taxon>Bacteria</taxon>
        <taxon>Pseudomonadati</taxon>
        <taxon>Pseudomonadota</taxon>
        <taxon>Gammaproteobacteria</taxon>
        <taxon>Enterobacterales</taxon>
        <taxon>Enterobacteriaceae</taxon>
        <taxon>Escherichia</taxon>
    </lineage>
</organism>
<keyword id="KW-0030">Aminoacyl-tRNA synthetase</keyword>
<keyword id="KW-0067">ATP-binding</keyword>
<keyword id="KW-0963">Cytoplasm</keyword>
<keyword id="KW-0436">Ligase</keyword>
<keyword id="KW-0547">Nucleotide-binding</keyword>
<keyword id="KW-0648">Protein biosynthesis</keyword>
<reference key="1">
    <citation type="journal article" date="2009" name="PLoS Genet.">
        <title>Organised genome dynamics in the Escherichia coli species results in highly diverse adaptive paths.</title>
        <authorList>
            <person name="Touchon M."/>
            <person name="Hoede C."/>
            <person name="Tenaillon O."/>
            <person name="Barbe V."/>
            <person name="Baeriswyl S."/>
            <person name="Bidet P."/>
            <person name="Bingen E."/>
            <person name="Bonacorsi S."/>
            <person name="Bouchier C."/>
            <person name="Bouvet O."/>
            <person name="Calteau A."/>
            <person name="Chiapello H."/>
            <person name="Clermont O."/>
            <person name="Cruveiller S."/>
            <person name="Danchin A."/>
            <person name="Diard M."/>
            <person name="Dossat C."/>
            <person name="Karoui M.E."/>
            <person name="Frapy E."/>
            <person name="Garry L."/>
            <person name="Ghigo J.M."/>
            <person name="Gilles A.M."/>
            <person name="Johnson J."/>
            <person name="Le Bouguenec C."/>
            <person name="Lescat M."/>
            <person name="Mangenot S."/>
            <person name="Martinez-Jehanne V."/>
            <person name="Matic I."/>
            <person name="Nassif X."/>
            <person name="Oztas S."/>
            <person name="Petit M.A."/>
            <person name="Pichon C."/>
            <person name="Rouy Z."/>
            <person name="Ruf C.S."/>
            <person name="Schneider D."/>
            <person name="Tourret J."/>
            <person name="Vacherie B."/>
            <person name="Vallenet D."/>
            <person name="Medigue C."/>
            <person name="Rocha E.P.C."/>
            <person name="Denamur E."/>
        </authorList>
    </citation>
    <scope>NUCLEOTIDE SEQUENCE [LARGE SCALE GENOMIC DNA]</scope>
    <source>
        <strain>ATCC 35469 / DSM 13698 / BCRC 15582 / CCUG 18766 / IAM 14443 / JCM 21226 / LMG 7866 / NBRC 102419 / NCTC 12128 / CDC 0568-73</strain>
    </source>
</reference>
<dbReference type="EC" id="6.1.1.15" evidence="1"/>
<dbReference type="EMBL" id="CU928158">
    <property type="protein sequence ID" value="CAQ87798.1"/>
    <property type="molecule type" value="Genomic_DNA"/>
</dbReference>
<dbReference type="RefSeq" id="WP_001260696.1">
    <property type="nucleotide sequence ID" value="NC_011740.1"/>
</dbReference>
<dbReference type="SMR" id="B7LW79"/>
<dbReference type="GeneID" id="75058698"/>
<dbReference type="KEGG" id="efe:EFER_0218"/>
<dbReference type="HOGENOM" id="CLU_016739_0_0_6"/>
<dbReference type="OrthoDB" id="9809052at2"/>
<dbReference type="Proteomes" id="UP000000745">
    <property type="component" value="Chromosome"/>
</dbReference>
<dbReference type="GO" id="GO:0005829">
    <property type="term" value="C:cytosol"/>
    <property type="evidence" value="ECO:0007669"/>
    <property type="project" value="TreeGrafter"/>
</dbReference>
<dbReference type="GO" id="GO:0002161">
    <property type="term" value="F:aminoacyl-tRNA deacylase activity"/>
    <property type="evidence" value="ECO:0007669"/>
    <property type="project" value="InterPro"/>
</dbReference>
<dbReference type="GO" id="GO:0005524">
    <property type="term" value="F:ATP binding"/>
    <property type="evidence" value="ECO:0007669"/>
    <property type="project" value="UniProtKB-UniRule"/>
</dbReference>
<dbReference type="GO" id="GO:0004827">
    <property type="term" value="F:proline-tRNA ligase activity"/>
    <property type="evidence" value="ECO:0007669"/>
    <property type="project" value="UniProtKB-UniRule"/>
</dbReference>
<dbReference type="GO" id="GO:0006433">
    <property type="term" value="P:prolyl-tRNA aminoacylation"/>
    <property type="evidence" value="ECO:0007669"/>
    <property type="project" value="UniProtKB-UniRule"/>
</dbReference>
<dbReference type="CDD" id="cd04334">
    <property type="entry name" value="ProRS-INS"/>
    <property type="match status" value="1"/>
</dbReference>
<dbReference type="CDD" id="cd00861">
    <property type="entry name" value="ProRS_anticodon_short"/>
    <property type="match status" value="1"/>
</dbReference>
<dbReference type="CDD" id="cd00779">
    <property type="entry name" value="ProRS_core_prok"/>
    <property type="match status" value="1"/>
</dbReference>
<dbReference type="FunFam" id="3.30.930.10:FF:000043">
    <property type="entry name" value="Proline--tRNA ligase"/>
    <property type="match status" value="1"/>
</dbReference>
<dbReference type="FunFam" id="3.30.930.10:FF:000097">
    <property type="entry name" value="Proline--tRNA ligase"/>
    <property type="match status" value="1"/>
</dbReference>
<dbReference type="FunFam" id="3.40.50.800:FF:000006">
    <property type="entry name" value="Proline--tRNA ligase"/>
    <property type="match status" value="1"/>
</dbReference>
<dbReference type="FunFam" id="3.90.960.10:FF:000001">
    <property type="entry name" value="Proline--tRNA ligase"/>
    <property type="match status" value="1"/>
</dbReference>
<dbReference type="Gene3D" id="3.40.50.800">
    <property type="entry name" value="Anticodon-binding domain"/>
    <property type="match status" value="1"/>
</dbReference>
<dbReference type="Gene3D" id="3.30.930.10">
    <property type="entry name" value="Bira Bifunctional Protein, Domain 2"/>
    <property type="match status" value="2"/>
</dbReference>
<dbReference type="Gene3D" id="3.90.960.10">
    <property type="entry name" value="YbaK/aminoacyl-tRNA synthetase-associated domain"/>
    <property type="match status" value="1"/>
</dbReference>
<dbReference type="HAMAP" id="MF_01569">
    <property type="entry name" value="Pro_tRNA_synth_type1"/>
    <property type="match status" value="1"/>
</dbReference>
<dbReference type="InterPro" id="IPR002314">
    <property type="entry name" value="aa-tRNA-synt_IIb"/>
</dbReference>
<dbReference type="InterPro" id="IPR006195">
    <property type="entry name" value="aa-tRNA-synth_II"/>
</dbReference>
<dbReference type="InterPro" id="IPR045864">
    <property type="entry name" value="aa-tRNA-synth_II/BPL/LPL"/>
</dbReference>
<dbReference type="InterPro" id="IPR004154">
    <property type="entry name" value="Anticodon-bd"/>
</dbReference>
<dbReference type="InterPro" id="IPR036621">
    <property type="entry name" value="Anticodon-bd_dom_sf"/>
</dbReference>
<dbReference type="InterPro" id="IPR002316">
    <property type="entry name" value="Pro-tRNA-ligase_IIa"/>
</dbReference>
<dbReference type="InterPro" id="IPR004500">
    <property type="entry name" value="Pro-tRNA-synth_IIa_bac-type"/>
</dbReference>
<dbReference type="InterPro" id="IPR023717">
    <property type="entry name" value="Pro-tRNA-Synthase_IIa_type1"/>
</dbReference>
<dbReference type="InterPro" id="IPR050062">
    <property type="entry name" value="Pro-tRNA_synthetase"/>
</dbReference>
<dbReference type="InterPro" id="IPR044140">
    <property type="entry name" value="ProRS_anticodon_short"/>
</dbReference>
<dbReference type="InterPro" id="IPR033730">
    <property type="entry name" value="ProRS_core_prok"/>
</dbReference>
<dbReference type="InterPro" id="IPR036754">
    <property type="entry name" value="YbaK/aa-tRNA-synt-asso_dom_sf"/>
</dbReference>
<dbReference type="InterPro" id="IPR007214">
    <property type="entry name" value="YbaK/aa-tRNA-synth-assoc-dom"/>
</dbReference>
<dbReference type="NCBIfam" id="NF006625">
    <property type="entry name" value="PRK09194.1"/>
    <property type="match status" value="1"/>
</dbReference>
<dbReference type="NCBIfam" id="TIGR00409">
    <property type="entry name" value="proS_fam_II"/>
    <property type="match status" value="1"/>
</dbReference>
<dbReference type="PANTHER" id="PTHR42753">
    <property type="entry name" value="MITOCHONDRIAL RIBOSOME PROTEIN L39/PROLYL-TRNA LIGASE FAMILY MEMBER"/>
    <property type="match status" value="1"/>
</dbReference>
<dbReference type="PANTHER" id="PTHR42753:SF2">
    <property type="entry name" value="PROLINE--TRNA LIGASE"/>
    <property type="match status" value="1"/>
</dbReference>
<dbReference type="Pfam" id="PF03129">
    <property type="entry name" value="HGTP_anticodon"/>
    <property type="match status" value="1"/>
</dbReference>
<dbReference type="Pfam" id="PF00587">
    <property type="entry name" value="tRNA-synt_2b"/>
    <property type="match status" value="1"/>
</dbReference>
<dbReference type="Pfam" id="PF04073">
    <property type="entry name" value="tRNA_edit"/>
    <property type="match status" value="1"/>
</dbReference>
<dbReference type="PIRSF" id="PIRSF001535">
    <property type="entry name" value="ProRS_1"/>
    <property type="match status" value="1"/>
</dbReference>
<dbReference type="PRINTS" id="PR01046">
    <property type="entry name" value="TRNASYNTHPRO"/>
</dbReference>
<dbReference type="SUPFAM" id="SSF52954">
    <property type="entry name" value="Class II aaRS ABD-related"/>
    <property type="match status" value="1"/>
</dbReference>
<dbReference type="SUPFAM" id="SSF55681">
    <property type="entry name" value="Class II aaRS and biotin synthetases"/>
    <property type="match status" value="1"/>
</dbReference>
<dbReference type="SUPFAM" id="SSF55826">
    <property type="entry name" value="YbaK/ProRS associated domain"/>
    <property type="match status" value="1"/>
</dbReference>
<dbReference type="PROSITE" id="PS50862">
    <property type="entry name" value="AA_TRNA_LIGASE_II"/>
    <property type="match status" value="1"/>
</dbReference>